<protein>
    <recommendedName>
        <fullName evidence="1">Peptide chain release factor 2</fullName>
        <shortName evidence="1">RF-2</shortName>
    </recommendedName>
</protein>
<accession>B4RQU4</accession>
<proteinExistence type="inferred from homology"/>
<dbReference type="EMBL" id="CP001050">
    <property type="protein sequence ID" value="ACF30904.1"/>
    <property type="molecule type" value="Genomic_DNA"/>
</dbReference>
<dbReference type="RefSeq" id="WP_003688127.1">
    <property type="nucleotide sequence ID" value="NC_011035.1"/>
</dbReference>
<dbReference type="SMR" id="B4RQU4"/>
<dbReference type="GeneID" id="66754167"/>
<dbReference type="KEGG" id="ngk:NGK_2300"/>
<dbReference type="HOGENOM" id="CLU_036856_6_0_4"/>
<dbReference type="Proteomes" id="UP000002564">
    <property type="component" value="Chromosome"/>
</dbReference>
<dbReference type="GO" id="GO:0005737">
    <property type="term" value="C:cytoplasm"/>
    <property type="evidence" value="ECO:0007669"/>
    <property type="project" value="UniProtKB-SubCell"/>
</dbReference>
<dbReference type="GO" id="GO:0016149">
    <property type="term" value="F:translation release factor activity, codon specific"/>
    <property type="evidence" value="ECO:0007669"/>
    <property type="project" value="UniProtKB-UniRule"/>
</dbReference>
<dbReference type="FunFam" id="3.30.160.20:FF:000010">
    <property type="entry name" value="Peptide chain release factor 2"/>
    <property type="match status" value="1"/>
</dbReference>
<dbReference type="Gene3D" id="3.30.160.20">
    <property type="match status" value="1"/>
</dbReference>
<dbReference type="Gene3D" id="3.30.70.1660">
    <property type="match status" value="1"/>
</dbReference>
<dbReference type="Gene3D" id="1.20.58.410">
    <property type="entry name" value="Release factor"/>
    <property type="match status" value="1"/>
</dbReference>
<dbReference type="HAMAP" id="MF_00094">
    <property type="entry name" value="Rel_fac_2"/>
    <property type="match status" value="1"/>
</dbReference>
<dbReference type="InterPro" id="IPR005139">
    <property type="entry name" value="PCRF"/>
</dbReference>
<dbReference type="InterPro" id="IPR000352">
    <property type="entry name" value="Pep_chain_release_fac_I"/>
</dbReference>
<dbReference type="InterPro" id="IPR045853">
    <property type="entry name" value="Pep_chain_release_fac_I_sf"/>
</dbReference>
<dbReference type="InterPro" id="IPR004374">
    <property type="entry name" value="PrfB"/>
</dbReference>
<dbReference type="NCBIfam" id="TIGR00020">
    <property type="entry name" value="prfB"/>
    <property type="match status" value="1"/>
</dbReference>
<dbReference type="PANTHER" id="PTHR43116:SF3">
    <property type="entry name" value="CLASS I PEPTIDE CHAIN RELEASE FACTOR"/>
    <property type="match status" value="1"/>
</dbReference>
<dbReference type="PANTHER" id="PTHR43116">
    <property type="entry name" value="PEPTIDE CHAIN RELEASE FACTOR 2"/>
    <property type="match status" value="1"/>
</dbReference>
<dbReference type="Pfam" id="PF03462">
    <property type="entry name" value="PCRF"/>
    <property type="match status" value="1"/>
</dbReference>
<dbReference type="Pfam" id="PF00472">
    <property type="entry name" value="RF-1"/>
    <property type="match status" value="1"/>
</dbReference>
<dbReference type="SMART" id="SM00937">
    <property type="entry name" value="PCRF"/>
    <property type="match status" value="1"/>
</dbReference>
<dbReference type="SUPFAM" id="SSF75620">
    <property type="entry name" value="Release factor"/>
    <property type="match status" value="1"/>
</dbReference>
<dbReference type="PROSITE" id="PS00745">
    <property type="entry name" value="RF_PROK_I"/>
    <property type="match status" value="1"/>
</dbReference>
<feature type="chain" id="PRO_1000093548" description="Peptide chain release factor 2">
    <location>
        <begin position="1"/>
        <end position="367"/>
    </location>
</feature>
<feature type="modified residue" description="N5-methylglutamine" evidence="1">
    <location>
        <position position="254"/>
    </location>
</feature>
<reference key="1">
    <citation type="journal article" date="2008" name="J. Bacteriol.">
        <title>Complete genome sequence of Neisseria gonorrhoeae NCCP11945.</title>
        <authorList>
            <person name="Chung G.T."/>
            <person name="Yoo J.S."/>
            <person name="Oh H.B."/>
            <person name="Lee Y.S."/>
            <person name="Cha S.H."/>
            <person name="Kim S.J."/>
            <person name="Yoo C.K."/>
        </authorList>
    </citation>
    <scope>NUCLEOTIDE SEQUENCE [LARGE SCALE GENOMIC DNA]</scope>
    <source>
        <strain>NCCP11945</strain>
    </source>
</reference>
<organism>
    <name type="scientific">Neisseria gonorrhoeae (strain NCCP11945)</name>
    <dbReference type="NCBI Taxonomy" id="521006"/>
    <lineage>
        <taxon>Bacteria</taxon>
        <taxon>Pseudomonadati</taxon>
        <taxon>Pseudomonadota</taxon>
        <taxon>Betaproteobacteria</taxon>
        <taxon>Neisseriales</taxon>
        <taxon>Neisseriaceae</taxon>
        <taxon>Neisseria</taxon>
    </lineage>
</organism>
<name>RF2_NEIG2</name>
<keyword id="KW-0963">Cytoplasm</keyword>
<keyword id="KW-0488">Methylation</keyword>
<keyword id="KW-0648">Protein biosynthesis</keyword>
<evidence type="ECO:0000255" key="1">
    <source>
        <dbReference type="HAMAP-Rule" id="MF_00094"/>
    </source>
</evidence>
<gene>
    <name evidence="1" type="primary">prfB</name>
    <name type="ordered locus">NGK_2300</name>
</gene>
<comment type="function">
    <text evidence="1">Peptide chain release factor 2 directs the termination of translation in response to the peptide chain termination codons UGA and UAA.</text>
</comment>
<comment type="subcellular location">
    <subcellularLocation>
        <location evidence="1">Cytoplasm</location>
    </subcellularLocation>
</comment>
<comment type="PTM">
    <text evidence="1">Methylated by PrmC. Methylation increases the termination efficiency of RF2.</text>
</comment>
<comment type="similarity">
    <text evidence="1">Belongs to the prokaryotic/mitochondrial release factor family.</text>
</comment>
<sequence length="367" mass="41362">MEAEVINQLNNTLNDLEKRSEDIRVYMDYQGKKDRLEEVIGLSEDPELWNDPKRAQEIGKESKILEGIVLTLDNIASGIEDNRMLIEMAVEENDEEGFAAVKEDVAGLEKQMADLEFKRMFNQPADPNNCFIDITAGAGGTEAEDWAGMLFRMYSRYAERKGFKIEILEEDDGEIAGINRATIRVEGEYAYGLLRTETGVHRLVRYSPFDSNNKRHTSFASVFVYPEIDDSIEIEINPADLRIDTYRASGAGGQHINKTDSAVRITHEPTGIVVQCQNDRSQHANKAAAMEMLKSKLYELEMRKRNEEKQALEEGKSDVGWGSQIRSYVLDSSRIKDLRTGYEVGNTKAVLDGDLDGFIEASLKQGV</sequence>